<name>SLU7_MACFA</name>
<gene>
    <name type="primary">SLU7</name>
    <name type="ORF">QtrA-13902</name>
</gene>
<proteinExistence type="evidence at transcript level"/>
<sequence>MSATVVDAVNAAPLSGSKEMSLEEPKKMTREDWRKKKELEEQRKLGNAPAEVDEEGKDINPHIPQYISSVPWYIDPSKRPTLKHQRPQPEKQKQFSSSGEWYKRGVKENSIITKYRKGACENCGAMTHKKKDCFERPRRVGAKFTGTNIAPDEHVQPQLMFDYDGKRDRWNGYNPEEHMKIVEEYAKVDLAKRTLKAQKLQEELASGKLVEQANSPKHQWGEEEPNSQTEKDHNSEDEDEDKYADDIDMPGQNFDSKRRITVRNLRIREDIAKYLRNLDPNSAYYDPKTRAMRENPYANAGKNPDEVSYAGDNFVRYTGDTISMAQTQLFAWEAYDRGSEVHLQADPTKLELLYKSFKVKKEDFKEQQKESILEKYGGQEHLDAPPAELLLAQTEDYVEYSRHGTVIKGQERAVACSKYEEDVKIHNHTHIWGSYWKEGRWGYKCCHSFFKYSYCTGEAGKEIVNSEECIINDITGDESVKKPQTLMELHQEKLKEEKKKKKKKKKKHRKSSSDSDDEEKKHEKLKKALNAEEARLLHVKETMQIDERKRPYNSIYETREPTEEEMEAYRMKRQRPDDPMASFLGQ</sequence>
<keyword id="KW-0007">Acetylation</keyword>
<keyword id="KW-0963">Cytoplasm</keyword>
<keyword id="KW-1017">Isopeptide bond</keyword>
<keyword id="KW-0479">Metal-binding</keyword>
<keyword id="KW-0507">mRNA processing</keyword>
<keyword id="KW-0508">mRNA splicing</keyword>
<keyword id="KW-0539">Nucleus</keyword>
<keyword id="KW-0597">Phosphoprotein</keyword>
<keyword id="KW-1185">Reference proteome</keyword>
<keyword id="KW-0747">Spliceosome</keyword>
<keyword id="KW-0832">Ubl conjugation</keyword>
<keyword id="KW-0862">Zinc</keyword>
<keyword id="KW-0863">Zinc-finger</keyword>
<feature type="initiator methionine" description="Removed" evidence="2">
    <location>
        <position position="1"/>
    </location>
</feature>
<feature type="chain" id="PRO_0000289195" description="Pre-mRNA-splicing factor SLU7">
    <location>
        <begin position="2"/>
        <end position="586"/>
    </location>
</feature>
<feature type="zinc finger region" description="CCHC-type">
    <location>
        <begin position="118"/>
        <end position="135"/>
    </location>
</feature>
<feature type="region of interest" description="Disordered" evidence="3">
    <location>
        <begin position="1"/>
        <end position="63"/>
    </location>
</feature>
<feature type="region of interest" description="Disordered" evidence="3">
    <location>
        <begin position="77"/>
        <end position="100"/>
    </location>
</feature>
<feature type="region of interest" description="Disordered" evidence="3">
    <location>
        <begin position="206"/>
        <end position="254"/>
    </location>
</feature>
<feature type="region of interest" description="Disordered" evidence="3">
    <location>
        <begin position="491"/>
        <end position="586"/>
    </location>
</feature>
<feature type="short sequence motif" description="Bipartite nuclear localization signal" evidence="1">
    <location>
        <begin position="129"/>
        <end position="169"/>
    </location>
</feature>
<feature type="compositionally biased region" description="Basic and acidic residues" evidence="3">
    <location>
        <begin position="20"/>
        <end position="44"/>
    </location>
</feature>
<feature type="compositionally biased region" description="Acidic residues" evidence="3">
    <location>
        <begin position="235"/>
        <end position="248"/>
    </location>
</feature>
<feature type="compositionally biased region" description="Basic residues" evidence="3">
    <location>
        <begin position="498"/>
        <end position="510"/>
    </location>
</feature>
<feature type="compositionally biased region" description="Basic and acidic residues" evidence="3">
    <location>
        <begin position="529"/>
        <end position="550"/>
    </location>
</feature>
<feature type="compositionally biased region" description="Basic and acidic residues" evidence="3">
    <location>
        <begin position="557"/>
        <end position="578"/>
    </location>
</feature>
<feature type="modified residue" description="N-acetylserine" evidence="2">
    <location>
        <position position="2"/>
    </location>
</feature>
<feature type="modified residue" description="Phosphoserine" evidence="2">
    <location>
        <position position="215"/>
    </location>
</feature>
<feature type="modified residue" description="Phosphoserine" evidence="2">
    <location>
        <position position="227"/>
    </location>
</feature>
<feature type="modified residue" description="Phosphoserine" evidence="2">
    <location>
        <position position="235"/>
    </location>
</feature>
<feature type="cross-link" description="Glycyl lysine isopeptide (Lys-Gly) (interchain with G-Cter in SUMO2)" evidence="2">
    <location>
        <position position="349"/>
    </location>
</feature>
<feature type="cross-link" description="Glycyl lysine isopeptide (Lys-Gly) (interchain with G-Cter in SUMO2)" evidence="2">
    <location>
        <position position="408"/>
    </location>
</feature>
<dbReference type="EMBL" id="AB169852">
    <property type="protein sequence ID" value="BAE01933.1"/>
    <property type="molecule type" value="mRNA"/>
</dbReference>
<dbReference type="RefSeq" id="NP_001270446.1">
    <property type="nucleotide sequence ID" value="NM_001283517.1"/>
</dbReference>
<dbReference type="SMR" id="Q4R4P2"/>
<dbReference type="STRING" id="9541.ENSMFAP00000004578"/>
<dbReference type="eggNOG" id="KOG2560">
    <property type="taxonomic scope" value="Eukaryota"/>
</dbReference>
<dbReference type="Proteomes" id="UP000233100">
    <property type="component" value="Unplaced"/>
</dbReference>
<dbReference type="GO" id="GO:0005737">
    <property type="term" value="C:cytoplasm"/>
    <property type="evidence" value="ECO:0000250"/>
    <property type="project" value="UniProtKB"/>
</dbReference>
<dbReference type="GO" id="GO:0016607">
    <property type="term" value="C:nuclear speck"/>
    <property type="evidence" value="ECO:0007669"/>
    <property type="project" value="UniProtKB-SubCell"/>
</dbReference>
<dbReference type="GO" id="GO:0005634">
    <property type="term" value="C:nucleus"/>
    <property type="evidence" value="ECO:0000250"/>
    <property type="project" value="UniProtKB"/>
</dbReference>
<dbReference type="GO" id="GO:0005681">
    <property type="term" value="C:spliceosomal complex"/>
    <property type="evidence" value="ECO:0007669"/>
    <property type="project" value="UniProtKB-KW"/>
</dbReference>
<dbReference type="GO" id="GO:0030628">
    <property type="term" value="F:pre-mRNA 3'-splice site binding"/>
    <property type="evidence" value="ECO:0007669"/>
    <property type="project" value="InterPro"/>
</dbReference>
<dbReference type="GO" id="GO:0008270">
    <property type="term" value="F:zinc ion binding"/>
    <property type="evidence" value="ECO:0007669"/>
    <property type="project" value="UniProtKB-KW"/>
</dbReference>
<dbReference type="GO" id="GO:0034605">
    <property type="term" value="P:cellular response to heat"/>
    <property type="evidence" value="ECO:0000250"/>
    <property type="project" value="UniProtKB"/>
</dbReference>
<dbReference type="GO" id="GO:0006886">
    <property type="term" value="P:intracellular protein transport"/>
    <property type="evidence" value="ECO:0000250"/>
    <property type="project" value="UniProtKB"/>
</dbReference>
<dbReference type="GO" id="GO:0000398">
    <property type="term" value="P:mRNA splicing, via spliceosome"/>
    <property type="evidence" value="ECO:0007669"/>
    <property type="project" value="InterPro"/>
</dbReference>
<dbReference type="InterPro" id="IPR021715">
    <property type="entry name" value="Slu7_dom"/>
</dbReference>
<dbReference type="InterPro" id="IPR039974">
    <property type="entry name" value="Splicing_factor_SLU7"/>
</dbReference>
<dbReference type="PANTHER" id="PTHR12942:SF2">
    <property type="entry name" value="PRE-MRNA-SPLICING FACTOR SLU7"/>
    <property type="match status" value="1"/>
</dbReference>
<dbReference type="PANTHER" id="PTHR12942">
    <property type="entry name" value="STEP II SPLICING FACTOR SLU7"/>
    <property type="match status" value="1"/>
</dbReference>
<dbReference type="Pfam" id="PF11708">
    <property type="entry name" value="Slu7"/>
    <property type="match status" value="1"/>
</dbReference>
<accession>Q4R4P2</accession>
<reference key="1">
    <citation type="submission" date="2005-06" db="EMBL/GenBank/DDBJ databases">
        <title>DNA sequences of macaque genes expressed in brain or testis and its evolutionary implications.</title>
        <authorList>
            <consortium name="International consortium for macaque cDNA sequencing and analysis"/>
        </authorList>
    </citation>
    <scope>NUCLEOTIDE SEQUENCE [LARGE SCALE MRNA]</scope>
    <source>
        <tissue>Temporal cortex</tissue>
    </source>
</reference>
<comment type="function">
    <text evidence="2">Required for pre-mRNA splicing as component of the spliceosome. Participates in the second catalytic step of pre-mRNA splicing, when the free hydroxyl group of exon I attacks the 3'-splice site to generate spliced mRNA and the excised lariat intron. Required for holding exon 1 properly in the spliceosome and for correct AG identification when more than one possible AG exists in 3'-splicing site region. May be involved in the activation of proximal AG. Probably also involved in alternative splicing regulation.</text>
</comment>
<comment type="subunit">
    <text evidence="2">Component of pre-catalytic, catalytic and post-catalytic spliceosomes. Associates with the spliceosome prior to recognition of the 3'-splice site for step II, probably during catalysis of step I.</text>
</comment>
<comment type="subcellular location">
    <subcellularLocation>
        <location evidence="2">Nucleus</location>
    </subcellularLocation>
    <subcellularLocation>
        <location evidence="2">Nucleus speckle</location>
    </subcellularLocation>
    <subcellularLocation>
        <location evidence="2">Cytoplasm</location>
    </subcellularLocation>
    <text evidence="2">Predominantly nuclear. Shuttling between the nucleus and the cytoplasm is regulated by the CCHC-type zinc finger. Upon UV-C stress stimulus, the nuclear concentration of the protein decreases, affecting alternative splicing. Translocates from the nucleus to the cytoplasm after heat shock cell treatment. Accumulates in cytoplasmic vesicle-like organelles after heat shock treatment, which may represent stress granules.</text>
</comment>
<comment type="domain">
    <text evidence="1">The CCHC-type zinc finger is required to retain the protein within the nucleus and prevent its shuttle back to the cytoplasm via the CRM1 pathway.</text>
</comment>
<comment type="similarity">
    <text evidence="4">Belongs to the SLU7 family.</text>
</comment>
<organism>
    <name type="scientific">Macaca fascicularis</name>
    <name type="common">Crab-eating macaque</name>
    <name type="synonym">Cynomolgus monkey</name>
    <dbReference type="NCBI Taxonomy" id="9541"/>
    <lineage>
        <taxon>Eukaryota</taxon>
        <taxon>Metazoa</taxon>
        <taxon>Chordata</taxon>
        <taxon>Craniata</taxon>
        <taxon>Vertebrata</taxon>
        <taxon>Euteleostomi</taxon>
        <taxon>Mammalia</taxon>
        <taxon>Eutheria</taxon>
        <taxon>Euarchontoglires</taxon>
        <taxon>Primates</taxon>
        <taxon>Haplorrhini</taxon>
        <taxon>Catarrhini</taxon>
        <taxon>Cercopithecidae</taxon>
        <taxon>Cercopithecinae</taxon>
        <taxon>Macaca</taxon>
    </lineage>
</organism>
<evidence type="ECO:0000250" key="1"/>
<evidence type="ECO:0000250" key="2">
    <source>
        <dbReference type="UniProtKB" id="O95391"/>
    </source>
</evidence>
<evidence type="ECO:0000256" key="3">
    <source>
        <dbReference type="SAM" id="MobiDB-lite"/>
    </source>
</evidence>
<evidence type="ECO:0000305" key="4"/>
<protein>
    <recommendedName>
        <fullName>Pre-mRNA-splicing factor SLU7</fullName>
    </recommendedName>
</protein>